<evidence type="ECO:0000250" key="1"/>
<evidence type="ECO:0000250" key="2">
    <source>
        <dbReference type="UniProtKB" id="P62737"/>
    </source>
</evidence>
<evidence type="ECO:0000250" key="3">
    <source>
        <dbReference type="UniProtKB" id="P68133"/>
    </source>
</evidence>
<evidence type="ECO:0000250" key="4">
    <source>
        <dbReference type="UniProtKB" id="P68134"/>
    </source>
</evidence>
<evidence type="ECO:0000250" key="5">
    <source>
        <dbReference type="UniProtKB" id="P68135"/>
    </source>
</evidence>
<evidence type="ECO:0000250" key="6">
    <source>
        <dbReference type="UniProtKB" id="P68137"/>
    </source>
</evidence>
<evidence type="ECO:0000250" key="7">
    <source>
        <dbReference type="UniProtKB" id="P68138"/>
    </source>
</evidence>
<evidence type="ECO:0000305" key="8"/>
<sequence>MCDEDETTALVCDNGSGLVKAGFAGDDAPRAVFPSIVGRPRHQGVMVGMGQKDSYVGDEAQSKRGILTLKYPIEHGIITNWDDMEKIWHHTFYNELRVAPEEHPTLLTEAPLNPKANREKMTQIMFETFNVPAMYVAIQAVLSLYASGRTTGIVLDSGDGVTHNVPIYEGYALPHAIMRLDLAGRDLTDYLMKILTERGYSFVTTAEREIVRDIKEKLCYVALDFENEMATAASSSSLEKSYELPDGQVITIGNERFRCPETLFQPSFIGMESAGIHETTYNSIMKCDIDIRKDLYANNVMSGGTTMYPGIADRMQKEITALAPSTMKIKIIAPPERKYSVWIGGSILASLSTFQQMWITKQEYDEAGPSIVHRKCF</sequence>
<keyword id="KW-0007">Acetylation</keyword>
<keyword id="KW-0067">ATP-binding</keyword>
<keyword id="KW-0963">Cytoplasm</keyword>
<keyword id="KW-0206">Cytoskeleton</keyword>
<keyword id="KW-0378">Hydrolase</keyword>
<keyword id="KW-0488">Methylation</keyword>
<keyword id="KW-0514">Muscle protein</keyword>
<keyword id="KW-0547">Nucleotide-binding</keyword>
<keyword id="KW-0558">Oxidation</keyword>
<keyword id="KW-1185">Reference proteome</keyword>
<organism>
    <name type="scientific">Pongo abelii</name>
    <name type="common">Sumatran orangutan</name>
    <name type="synonym">Pongo pygmaeus abelii</name>
    <dbReference type="NCBI Taxonomy" id="9601"/>
    <lineage>
        <taxon>Eukaryota</taxon>
        <taxon>Metazoa</taxon>
        <taxon>Chordata</taxon>
        <taxon>Craniata</taxon>
        <taxon>Vertebrata</taxon>
        <taxon>Euteleostomi</taxon>
        <taxon>Mammalia</taxon>
        <taxon>Eutheria</taxon>
        <taxon>Euarchontoglires</taxon>
        <taxon>Primates</taxon>
        <taxon>Haplorrhini</taxon>
        <taxon>Catarrhini</taxon>
        <taxon>Hominidae</taxon>
        <taxon>Pongo</taxon>
    </lineage>
</organism>
<protein>
    <recommendedName>
        <fullName>Actin, alpha skeletal muscle</fullName>
        <ecNumber evidence="6">3.6.4.-</ecNumber>
    </recommendedName>
    <alternativeName>
        <fullName>Alpha-actin-1</fullName>
    </alternativeName>
    <component>
        <recommendedName>
            <fullName>Actin, alpha skeletal muscle, intermediate form</fullName>
        </recommendedName>
    </component>
</protein>
<feature type="initiator methionine" description="Removed">
    <location>
        <position position="1"/>
    </location>
</feature>
<feature type="chain" id="PRO_0000442809" description="Actin, alpha skeletal muscle, intermediate form" evidence="2">
    <location>
        <begin position="2"/>
        <end position="377"/>
    </location>
</feature>
<feature type="chain" id="PRO_0000442810" description="Actin, alpha skeletal muscle" evidence="2">
    <location>
        <begin position="3"/>
        <end position="377"/>
    </location>
</feature>
<feature type="region of interest" description="Interaction with alpha-actinin" evidence="5">
    <location>
        <begin position="112"/>
        <end position="125"/>
    </location>
</feature>
<feature type="region of interest" description="Interaction with alpha-actinin" evidence="5">
    <location>
        <begin position="360"/>
        <end position="372"/>
    </location>
</feature>
<feature type="modified residue" description="N-acetylcysteine; in intermediate form" evidence="2">
    <location>
        <position position="2"/>
    </location>
</feature>
<feature type="modified residue" description="Methionine (R)-sulfoxide" evidence="4">
    <location>
        <position position="46"/>
    </location>
</feature>
<feature type="modified residue" description="Methionine (R)-sulfoxide" evidence="4">
    <location>
        <position position="49"/>
    </location>
</feature>
<feature type="modified residue" description="N6-malonyllysine" evidence="1">
    <location>
        <position position="63"/>
    </location>
</feature>
<feature type="modified residue" description="Tele-methylhistidine" evidence="7">
    <location>
        <position position="75"/>
    </location>
</feature>
<feature type="modified residue" description="N6-methyllysine" evidence="3">
    <location>
        <position position="86"/>
    </location>
</feature>
<proteinExistence type="evidence at transcript level"/>
<accession>Q5R9Q5</accession>
<name>ACTS_PONAB</name>
<reference key="1">
    <citation type="submission" date="2004-11" db="EMBL/GenBank/DDBJ databases">
        <authorList>
            <consortium name="The German cDNA consortium"/>
        </authorList>
    </citation>
    <scope>NUCLEOTIDE SEQUENCE [LARGE SCALE MRNA]</scope>
    <source>
        <tissue>Heart</tissue>
    </source>
</reference>
<comment type="function">
    <text evidence="1">Actins are highly conserved proteins that are involved in various types of cell motility and are ubiquitously expressed in all eukaryotic cells.</text>
</comment>
<comment type="catalytic activity">
    <reaction evidence="6">
        <text>ATP + H2O = ADP + phosphate + H(+)</text>
        <dbReference type="Rhea" id="RHEA:13065"/>
        <dbReference type="ChEBI" id="CHEBI:15377"/>
        <dbReference type="ChEBI" id="CHEBI:15378"/>
        <dbReference type="ChEBI" id="CHEBI:30616"/>
        <dbReference type="ChEBI" id="CHEBI:43474"/>
        <dbReference type="ChEBI" id="CHEBI:456216"/>
    </reaction>
</comment>
<comment type="subunit">
    <text evidence="3 5">Polymerization of globular actin (G-actin) leads to a structural filament (F-actin) in the form of a two-stranded helix. Each actin can bind to 4 others (By similarity). Interacts with alpha-actinin. Identified in a complex composed of ACTA1, COBL, GSN AND TMSB4X (By similarity). Interacts with TTID. Interacts (via its C-terminus) with USP25 (By similarity).</text>
</comment>
<comment type="subcellular location">
    <subcellularLocation>
        <location evidence="1">Cytoplasm</location>
        <location evidence="1">Cytoskeleton</location>
    </subcellularLocation>
</comment>
<comment type="PTM">
    <molecule>Actin, alpha skeletal muscle, intermediate form</molecule>
    <text evidence="4">N-terminal cleavage of acetylated cysteine of intermediate muscle actin by ACTMAP.</text>
</comment>
<comment type="PTM">
    <text evidence="4">Oxidation of Met-46 and Met-49 by MICALs (MICAL1, MICAL2 or MICAL3) to form methionine sulfoxide promotes actin filament depolymerization. MICAL1 and MICAL2 produce the (R)-S-oxide form. The (R)-S-oxide form is reverted by MSRB1 and MSRB2, which promotes actin repolymerization.</text>
</comment>
<comment type="PTM">
    <text evidence="3">Monomethylation at Lys-86 (K84me1) regulates actin-myosin interaction and actomyosin-dependent processes. Demethylation by ALKBH4 is required for maintaining actomyosin dynamics supporting normal cleavage furrow ingression during cytokinesis and cell migration.</text>
</comment>
<comment type="PTM">
    <text evidence="3">Methylated at His-75 by SETD3.</text>
</comment>
<comment type="miscellaneous">
    <text>In vertebrates 3 main groups of actin isoforms, alpha, beta and gamma have been identified. The alpha actins are found in muscle tissues and are a major constituent of the contractile apparatus. The beta and gamma actins coexist in most cell types as components of the cytoskeleton and as mediators of internal cell motility.</text>
</comment>
<comment type="similarity">
    <text evidence="8">Belongs to the actin family.</text>
</comment>
<dbReference type="EC" id="3.6.4.-" evidence="6"/>
<dbReference type="EMBL" id="CR859327">
    <property type="protein sequence ID" value="CAH91505.1"/>
    <property type="molecule type" value="mRNA"/>
</dbReference>
<dbReference type="RefSeq" id="NP_001125886.1">
    <property type="nucleotide sequence ID" value="NM_001132414.1"/>
</dbReference>
<dbReference type="SMR" id="Q5R9Q5"/>
<dbReference type="FunCoup" id="Q5R9Q5">
    <property type="interactions" value="534"/>
</dbReference>
<dbReference type="STRING" id="9601.ENSPPYP00000000129"/>
<dbReference type="Ensembl" id="ENSPPYT00000000138.3">
    <property type="protein sequence ID" value="ENSPPYP00000000129.2"/>
    <property type="gene ID" value="ENSPPYG00000000127.3"/>
</dbReference>
<dbReference type="GeneID" id="100172818"/>
<dbReference type="KEGG" id="pon:100172818"/>
<dbReference type="CTD" id="58"/>
<dbReference type="eggNOG" id="KOG0676">
    <property type="taxonomic scope" value="Eukaryota"/>
</dbReference>
<dbReference type="GeneTree" id="ENSGT00940000156048"/>
<dbReference type="HOGENOM" id="CLU_027965_0_2_1"/>
<dbReference type="InParanoid" id="Q5R9Q5"/>
<dbReference type="OMA" id="EDAPRCC"/>
<dbReference type="OrthoDB" id="9816491at2759"/>
<dbReference type="TreeFam" id="TF354237"/>
<dbReference type="Proteomes" id="UP000001595">
    <property type="component" value="Chromosome 1"/>
</dbReference>
<dbReference type="GO" id="GO:0005884">
    <property type="term" value="C:actin filament"/>
    <property type="evidence" value="ECO:0007669"/>
    <property type="project" value="Ensembl"/>
</dbReference>
<dbReference type="GO" id="GO:0044297">
    <property type="term" value="C:cell body"/>
    <property type="evidence" value="ECO:0000250"/>
    <property type="project" value="AgBase"/>
</dbReference>
<dbReference type="GO" id="GO:0005737">
    <property type="term" value="C:cytoplasm"/>
    <property type="evidence" value="ECO:0000250"/>
    <property type="project" value="AgBase"/>
</dbReference>
<dbReference type="GO" id="GO:0030175">
    <property type="term" value="C:filopodium"/>
    <property type="evidence" value="ECO:0000250"/>
    <property type="project" value="AgBase"/>
</dbReference>
<dbReference type="GO" id="GO:0030027">
    <property type="term" value="C:lamellipodium"/>
    <property type="evidence" value="ECO:0000250"/>
    <property type="project" value="AgBase"/>
</dbReference>
<dbReference type="GO" id="GO:0001725">
    <property type="term" value="C:stress fiber"/>
    <property type="evidence" value="ECO:0007669"/>
    <property type="project" value="Ensembl"/>
</dbReference>
<dbReference type="GO" id="GO:0005865">
    <property type="term" value="C:striated muscle thin filament"/>
    <property type="evidence" value="ECO:0007669"/>
    <property type="project" value="Ensembl"/>
</dbReference>
<dbReference type="GO" id="GO:0005524">
    <property type="term" value="F:ATP binding"/>
    <property type="evidence" value="ECO:0007669"/>
    <property type="project" value="UniProtKB-KW"/>
</dbReference>
<dbReference type="GO" id="GO:0016787">
    <property type="term" value="F:hydrolase activity"/>
    <property type="evidence" value="ECO:0007669"/>
    <property type="project" value="UniProtKB-KW"/>
</dbReference>
<dbReference type="GO" id="GO:0090131">
    <property type="term" value="P:mesenchyme migration"/>
    <property type="evidence" value="ECO:0000250"/>
    <property type="project" value="AgBase"/>
</dbReference>
<dbReference type="GO" id="GO:0010628">
    <property type="term" value="P:positive regulation of gene expression"/>
    <property type="evidence" value="ECO:0000250"/>
    <property type="project" value="AgBase"/>
</dbReference>
<dbReference type="GO" id="GO:0048741">
    <property type="term" value="P:skeletal muscle fiber development"/>
    <property type="evidence" value="ECO:0007669"/>
    <property type="project" value="Ensembl"/>
</dbReference>
<dbReference type="GO" id="GO:0030240">
    <property type="term" value="P:skeletal muscle thin filament assembly"/>
    <property type="evidence" value="ECO:0007669"/>
    <property type="project" value="Ensembl"/>
</dbReference>
<dbReference type="CDD" id="cd10224">
    <property type="entry name" value="ASKHA_NBD_actin"/>
    <property type="match status" value="1"/>
</dbReference>
<dbReference type="FunFam" id="3.30.420.40:FF:000131">
    <property type="entry name" value="Actin, alpha skeletal muscle"/>
    <property type="match status" value="1"/>
</dbReference>
<dbReference type="FunFam" id="3.30.420.40:FF:000291">
    <property type="entry name" value="Actin, alpha skeletal muscle"/>
    <property type="match status" value="1"/>
</dbReference>
<dbReference type="FunFam" id="3.90.640.10:FF:000047">
    <property type="entry name" value="Actin, alpha skeletal muscle"/>
    <property type="match status" value="1"/>
</dbReference>
<dbReference type="FunFam" id="3.30.420.40:FF:000058">
    <property type="entry name" value="Putative actin-related protein 5"/>
    <property type="match status" value="1"/>
</dbReference>
<dbReference type="Gene3D" id="3.30.420.40">
    <property type="match status" value="2"/>
</dbReference>
<dbReference type="Gene3D" id="3.90.640.10">
    <property type="entry name" value="Actin, Chain A, domain 4"/>
    <property type="match status" value="1"/>
</dbReference>
<dbReference type="InterPro" id="IPR004000">
    <property type="entry name" value="Actin"/>
</dbReference>
<dbReference type="InterPro" id="IPR020902">
    <property type="entry name" value="Actin/actin-like_CS"/>
</dbReference>
<dbReference type="InterPro" id="IPR004001">
    <property type="entry name" value="Actin_CS"/>
</dbReference>
<dbReference type="InterPro" id="IPR043129">
    <property type="entry name" value="ATPase_NBD"/>
</dbReference>
<dbReference type="PANTHER" id="PTHR11937">
    <property type="entry name" value="ACTIN"/>
    <property type="match status" value="1"/>
</dbReference>
<dbReference type="Pfam" id="PF00022">
    <property type="entry name" value="Actin"/>
    <property type="match status" value="1"/>
</dbReference>
<dbReference type="PRINTS" id="PR00190">
    <property type="entry name" value="ACTIN"/>
</dbReference>
<dbReference type="SMART" id="SM00268">
    <property type="entry name" value="ACTIN"/>
    <property type="match status" value="1"/>
</dbReference>
<dbReference type="SUPFAM" id="SSF53067">
    <property type="entry name" value="Actin-like ATPase domain"/>
    <property type="match status" value="2"/>
</dbReference>
<dbReference type="PROSITE" id="PS00406">
    <property type="entry name" value="ACTINS_1"/>
    <property type="match status" value="1"/>
</dbReference>
<dbReference type="PROSITE" id="PS00432">
    <property type="entry name" value="ACTINS_2"/>
    <property type="match status" value="1"/>
</dbReference>
<dbReference type="PROSITE" id="PS01132">
    <property type="entry name" value="ACTINS_ACT_LIKE"/>
    <property type="match status" value="1"/>
</dbReference>
<gene>
    <name type="primary">ACTA1</name>
    <name type="synonym">ACTA</name>
</gene>